<gene>
    <name type="primary">tbx-30</name>
    <name type="ORF">Y59E9AR.3</name>
</gene>
<gene>
    <name type="primary">tbx-42</name>
    <name type="ORF">Y59E9AR.5</name>
</gene>
<sequence>MNPSTQIVVKMSNEELWKERYPNMEMISNSKRITPIFPEIKFKISGLEENSRYVLVLSLEKMDNIRYGINENKEWAPSSARKPKPHHNMKFFFHPEGTKLGKELMAETVEFTSVRITTSEKLSEKENVFYVHTMHKYVPVLTIRNLTTGEIASNIFKMEIAQFFPVSIYQQASMGRWKSDLNKHSTFGNRSEGGIKRKTSDAAGQLPSKRSSKKPVKKDVVDNSEVTLEVKTSQYLVNQNESNLTEYIPSSPLYSSQNQYQYPFHPYSPFDSSIPYPYSPMDYSYYFNPTFQSFSPENVYFDENRNPH</sequence>
<comment type="function">
    <text evidence="3">Involved in the regulatory network to control embryonic patterning and morphogenesis. Implicated in negatively regulating vab-7 expression at the anterior of embryos.</text>
</comment>
<comment type="subcellular location">
    <subcellularLocation>
        <location evidence="1">Nucleus</location>
    </subcellularLocation>
</comment>
<comment type="disruption phenotype">
    <text evidence="3">Alters embryonic vab-7 expression pattern.</text>
</comment>
<reference key="1">
    <citation type="journal article" date="1998" name="Science">
        <title>Genome sequence of the nematode C. elegans: a platform for investigating biology.</title>
        <authorList>
            <consortium name="The C. elegans sequencing consortium"/>
        </authorList>
    </citation>
    <scope>NUCLEOTIDE SEQUENCE [LARGE SCALE GENOMIC DNA]</scope>
    <source>
        <strain>Bristol N2</strain>
    </source>
</reference>
<reference key="2">
    <citation type="journal article" date="2004" name="Development">
        <title>A regulatory network of T-box genes and the even-skipped homologue vab-7 controls patterning and morphogenesis in C. elegans.</title>
        <authorList>
            <person name="Pocock R."/>
            <person name="Ahringer J."/>
            <person name="Mitsch M."/>
            <person name="Maxwell S."/>
            <person name="Woollard A."/>
        </authorList>
    </citation>
    <scope>FUNCTION</scope>
    <scope>DISRUPTION PHENOTYPE</scope>
</reference>
<feature type="chain" id="PRO_0000184476" description="Putative T-box protein 30/42">
    <location>
        <begin position="1"/>
        <end position="308"/>
    </location>
</feature>
<feature type="DNA-binding region" description="T-box" evidence="1">
    <location>
        <begin position="11"/>
        <end position="192"/>
    </location>
</feature>
<feature type="region of interest" description="Disordered" evidence="2">
    <location>
        <begin position="186"/>
        <end position="220"/>
    </location>
</feature>
<accession>Q9N2K7</accession>
<protein>
    <recommendedName>
        <fullName>Putative T-box protein 30/42</fullName>
    </recommendedName>
</protein>
<organism>
    <name type="scientific">Caenorhabditis elegans</name>
    <dbReference type="NCBI Taxonomy" id="6239"/>
    <lineage>
        <taxon>Eukaryota</taxon>
        <taxon>Metazoa</taxon>
        <taxon>Ecdysozoa</taxon>
        <taxon>Nematoda</taxon>
        <taxon>Chromadorea</taxon>
        <taxon>Rhabditida</taxon>
        <taxon>Rhabditina</taxon>
        <taxon>Rhabditomorpha</taxon>
        <taxon>Rhabditoidea</taxon>
        <taxon>Rhabditidae</taxon>
        <taxon>Peloderinae</taxon>
        <taxon>Caenorhabditis</taxon>
    </lineage>
</organism>
<name>TBX30_CAEEL</name>
<keyword id="KW-0217">Developmental protein</keyword>
<keyword id="KW-0238">DNA-binding</keyword>
<keyword id="KW-0539">Nucleus</keyword>
<keyword id="KW-1185">Reference proteome</keyword>
<keyword id="KW-0804">Transcription</keyword>
<keyword id="KW-0805">Transcription regulation</keyword>
<evidence type="ECO:0000255" key="1">
    <source>
        <dbReference type="PROSITE-ProRule" id="PRU00201"/>
    </source>
</evidence>
<evidence type="ECO:0000256" key="2">
    <source>
        <dbReference type="SAM" id="MobiDB-lite"/>
    </source>
</evidence>
<evidence type="ECO:0000269" key="3">
    <source>
    </source>
</evidence>
<dbReference type="EMBL" id="FO081311">
    <property type="protein sequence ID" value="CCD70691.1"/>
    <property type="molecule type" value="Genomic_DNA"/>
</dbReference>
<dbReference type="EMBL" id="FO081311">
    <property type="protein sequence ID" value="CCD70693.1"/>
    <property type="molecule type" value="Genomic_DNA"/>
</dbReference>
<dbReference type="RefSeq" id="NP_500749.1">
    <property type="nucleotide sequence ID" value="NM_068348.1"/>
</dbReference>
<dbReference type="RefSeq" id="NP_500750.1">
    <property type="nucleotide sequence ID" value="NM_068349.1"/>
</dbReference>
<dbReference type="SMR" id="Q9N2K7"/>
<dbReference type="BioGRID" id="55006">
    <property type="interactions" value="5"/>
</dbReference>
<dbReference type="DIP" id="DIP-24914N"/>
<dbReference type="FunCoup" id="Q9N2K7">
    <property type="interactions" value="2"/>
</dbReference>
<dbReference type="IntAct" id="Q9N2K7">
    <property type="interactions" value="5"/>
</dbReference>
<dbReference type="STRING" id="6239.Y59E9AR.3.1"/>
<dbReference type="PaxDb" id="6239-Y59E9AR.3"/>
<dbReference type="EnsemblMetazoa" id="Y59E9AR.3.1">
    <property type="protein sequence ID" value="Y59E9AR.3.1"/>
    <property type="gene ID" value="WBGene00006549"/>
</dbReference>
<dbReference type="EnsemblMetazoa" id="Y59E9AR.5.1">
    <property type="protein sequence ID" value="Y59E9AR.5.1"/>
    <property type="gene ID" value="WBGene00022000"/>
</dbReference>
<dbReference type="GeneID" id="190419"/>
<dbReference type="GeneID" id="190421"/>
<dbReference type="KEGG" id="cel:CELE_Y59E9AR.3"/>
<dbReference type="KEGG" id="cel:CELE_Y59E9AR.5"/>
<dbReference type="UCSC" id="Y59E9AR.5">
    <property type="organism name" value="c. elegans"/>
</dbReference>
<dbReference type="AGR" id="WB:WBGene00006549"/>
<dbReference type="AGR" id="WB:WBGene00022000"/>
<dbReference type="CTD" id="190419"/>
<dbReference type="CTD" id="190421"/>
<dbReference type="WormBase" id="Y59E9AR.3">
    <property type="protein sequence ID" value="CE25515"/>
    <property type="gene ID" value="WBGene00006549"/>
    <property type="gene designation" value="tbx-30"/>
</dbReference>
<dbReference type="WormBase" id="Y59E9AR.5">
    <property type="protein sequence ID" value="CE25515"/>
    <property type="gene ID" value="WBGene00022000"/>
    <property type="gene designation" value="tbx-42"/>
</dbReference>
<dbReference type="eggNOG" id="KOG3585">
    <property type="taxonomic scope" value="Eukaryota"/>
</dbReference>
<dbReference type="GeneTree" id="ENSGT00970000196896"/>
<dbReference type="HOGENOM" id="CLU_728115_0_0_1"/>
<dbReference type="InParanoid" id="Q9N2K7"/>
<dbReference type="OMA" id="IRVEDMM"/>
<dbReference type="OrthoDB" id="5867717at2759"/>
<dbReference type="PhylomeDB" id="Q9N2K7"/>
<dbReference type="PRO" id="PR:Q9N2K7"/>
<dbReference type="Proteomes" id="UP000001940">
    <property type="component" value="Chromosome IV"/>
</dbReference>
<dbReference type="Bgee" id="WBGene00006549">
    <property type="expression patterns" value="Expressed in embryo and 1 other cell type or tissue"/>
</dbReference>
<dbReference type="GO" id="GO:0000785">
    <property type="term" value="C:chromatin"/>
    <property type="evidence" value="ECO:0000318"/>
    <property type="project" value="GO_Central"/>
</dbReference>
<dbReference type="GO" id="GO:0005634">
    <property type="term" value="C:nucleus"/>
    <property type="evidence" value="ECO:0000318"/>
    <property type="project" value="GO_Central"/>
</dbReference>
<dbReference type="GO" id="GO:0000981">
    <property type="term" value="F:DNA-binding transcription factor activity, RNA polymerase II-specific"/>
    <property type="evidence" value="ECO:0000318"/>
    <property type="project" value="GO_Central"/>
</dbReference>
<dbReference type="GO" id="GO:0000978">
    <property type="term" value="F:RNA polymerase II cis-regulatory region sequence-specific DNA binding"/>
    <property type="evidence" value="ECO:0000318"/>
    <property type="project" value="GO_Central"/>
</dbReference>
<dbReference type="GO" id="GO:0001708">
    <property type="term" value="P:cell fate specification"/>
    <property type="evidence" value="ECO:0000318"/>
    <property type="project" value="GO_Central"/>
</dbReference>
<dbReference type="GO" id="GO:0045893">
    <property type="term" value="P:positive regulation of DNA-templated transcription"/>
    <property type="evidence" value="ECO:0007669"/>
    <property type="project" value="InterPro"/>
</dbReference>
<dbReference type="GO" id="GO:0006357">
    <property type="term" value="P:regulation of transcription by RNA polymerase II"/>
    <property type="evidence" value="ECO:0000318"/>
    <property type="project" value="GO_Central"/>
</dbReference>
<dbReference type="CDD" id="cd00182">
    <property type="entry name" value="T-box"/>
    <property type="match status" value="1"/>
</dbReference>
<dbReference type="FunFam" id="2.60.40.820:FF:000018">
    <property type="entry name" value="Putative T-box protein 35"/>
    <property type="match status" value="1"/>
</dbReference>
<dbReference type="Gene3D" id="2.60.40.820">
    <property type="entry name" value="Transcription factor, T-box"/>
    <property type="match status" value="1"/>
</dbReference>
<dbReference type="InterPro" id="IPR008967">
    <property type="entry name" value="p53-like_TF_DNA-bd_sf"/>
</dbReference>
<dbReference type="InterPro" id="IPR046360">
    <property type="entry name" value="T-box_DNA-bd"/>
</dbReference>
<dbReference type="InterPro" id="IPR036960">
    <property type="entry name" value="T-box_sf"/>
</dbReference>
<dbReference type="InterPro" id="IPR001699">
    <property type="entry name" value="TF_T-box"/>
</dbReference>
<dbReference type="InterPro" id="IPR018186">
    <property type="entry name" value="TF_T-box_CS"/>
</dbReference>
<dbReference type="PANTHER" id="PTHR11267:SF196">
    <property type="entry name" value="T-BOX PROTEIN 30_42-RELATED"/>
    <property type="match status" value="1"/>
</dbReference>
<dbReference type="PANTHER" id="PTHR11267">
    <property type="entry name" value="T-BOX PROTEIN-RELATED"/>
    <property type="match status" value="1"/>
</dbReference>
<dbReference type="Pfam" id="PF00907">
    <property type="entry name" value="T-box"/>
    <property type="match status" value="1"/>
</dbReference>
<dbReference type="PRINTS" id="PR00937">
    <property type="entry name" value="TBOX"/>
</dbReference>
<dbReference type="SMART" id="SM00425">
    <property type="entry name" value="TBOX"/>
    <property type="match status" value="1"/>
</dbReference>
<dbReference type="SUPFAM" id="SSF49417">
    <property type="entry name" value="p53-like transcription factors"/>
    <property type="match status" value="1"/>
</dbReference>
<dbReference type="PROSITE" id="PS01264">
    <property type="entry name" value="TBOX_2"/>
    <property type="match status" value="1"/>
</dbReference>
<dbReference type="PROSITE" id="PS50252">
    <property type="entry name" value="TBOX_3"/>
    <property type="match status" value="1"/>
</dbReference>
<proteinExistence type="inferred from homology"/>